<evidence type="ECO:0000250" key="1"/>
<evidence type="ECO:0000255" key="2"/>
<evidence type="ECO:0000256" key="3">
    <source>
        <dbReference type="SAM" id="MobiDB-lite"/>
    </source>
</evidence>
<evidence type="ECO:0000269" key="4">
    <source>
    </source>
</evidence>
<evidence type="ECO:0000305" key="5"/>
<name>SPXN_MOUSE</name>
<protein>
    <recommendedName>
        <fullName>Spexin</fullName>
    </recommendedName>
    <alternativeName>
        <fullName>NPQ</fullName>
    </alternativeName>
    <alternativeName>
        <fullName>Neuropeptide Q</fullName>
    </alternativeName>
    <alternativeName>
        <fullName>Spexin hormone</fullName>
    </alternativeName>
    <component>
        <recommendedName>
            <fullName>Spexin-1</fullName>
        </recommendedName>
    </component>
    <component>
        <recommendedName>
            <fullName>Spexin-2</fullName>
        </recommendedName>
    </component>
</protein>
<keyword id="KW-0027">Amidation</keyword>
<keyword id="KW-0165">Cleavage on pair of basic residues</keyword>
<keyword id="KW-0968">Cytoplasmic vesicle</keyword>
<keyword id="KW-0372">Hormone</keyword>
<keyword id="KW-1185">Reference proteome</keyword>
<keyword id="KW-0964">Secreted</keyword>
<keyword id="KW-0732">Signal</keyword>
<reference key="1">
    <citation type="journal article" date="2009" name="PLoS Biol.">
        <title>Lineage-specific biology revealed by a finished genome assembly of the mouse.</title>
        <authorList>
            <person name="Church D.M."/>
            <person name="Goodstadt L."/>
            <person name="Hillier L.W."/>
            <person name="Zody M.C."/>
            <person name="Goldstein S."/>
            <person name="She X."/>
            <person name="Bult C.J."/>
            <person name="Agarwala R."/>
            <person name="Cherry J.L."/>
            <person name="DiCuccio M."/>
            <person name="Hlavina W."/>
            <person name="Kapustin Y."/>
            <person name="Meric P."/>
            <person name="Maglott D."/>
            <person name="Birtle Z."/>
            <person name="Marques A.C."/>
            <person name="Graves T."/>
            <person name="Zhou S."/>
            <person name="Teague B."/>
            <person name="Potamousis K."/>
            <person name="Churas C."/>
            <person name="Place M."/>
            <person name="Herschleb J."/>
            <person name="Runnheim R."/>
            <person name="Forrest D."/>
            <person name="Amos-Landgraf J."/>
            <person name="Schwartz D.C."/>
            <person name="Cheng Z."/>
            <person name="Lindblad-Toh K."/>
            <person name="Eichler E.E."/>
            <person name="Ponting C.P."/>
        </authorList>
    </citation>
    <scope>NUCLEOTIDE SEQUENCE [LARGE SCALE GENOMIC DNA]</scope>
    <source>
        <strain>C57BL/6J</strain>
    </source>
</reference>
<reference key="2">
    <citation type="journal article" date="2014" name="Obesity">
        <title>Spexin is a novel human peptide that reduces adipocyte uptake of long chain fatty acids and causes weight loss in rodents with diet-induced obesity.</title>
        <authorList>
            <person name="Walewski J.L."/>
            <person name="Ge F."/>
            <person name="Lobdell H. IV"/>
            <person name="Levin N."/>
            <person name="Schwartz G.J."/>
            <person name="Vasselli J.R."/>
            <person name="Pomp A."/>
            <person name="Dakin G."/>
            <person name="Berk P.D."/>
        </authorList>
    </citation>
    <scope>FUNCTION (SPEXIN-1)</scope>
    <scope>SUBCELLULAR LOCATION</scope>
    <scope>INDUCTION</scope>
</reference>
<proteinExistence type="evidence at transcript level"/>
<feature type="signal peptide" evidence="2">
    <location>
        <begin position="1"/>
        <end position="26"/>
    </location>
</feature>
<feature type="chain" id="PRO_0000430216" description="Spexin">
    <location>
        <begin position="27"/>
        <end position="116"/>
    </location>
</feature>
<feature type="propeptide" id="PRO_0000430217" evidence="1">
    <location>
        <begin position="27"/>
        <end position="35"/>
    </location>
</feature>
<feature type="peptide" id="PRO_0000430218" description="Spexin-1">
    <location>
        <begin position="36"/>
        <end position="49"/>
    </location>
</feature>
<feature type="propeptide" id="PRO_0000430219" evidence="1">
    <location>
        <begin position="50"/>
        <end position="116"/>
    </location>
</feature>
<feature type="peptide" id="PRO_0000430220" description="Spexin-2">
    <location>
        <begin position="53"/>
        <end position="70"/>
    </location>
</feature>
<feature type="propeptide" id="PRO_0000430221" evidence="1">
    <location>
        <begin position="74"/>
        <end position="116"/>
    </location>
</feature>
<feature type="region of interest" description="Disordered" evidence="3">
    <location>
        <begin position="52"/>
        <end position="77"/>
    </location>
</feature>
<feature type="compositionally biased region" description="Basic and acidic residues" evidence="3">
    <location>
        <begin position="53"/>
        <end position="75"/>
    </location>
</feature>
<feature type="site" description="Cleavage; by prohormone convertase 2" evidence="1">
    <location>
        <begin position="35"/>
        <end position="36"/>
    </location>
</feature>
<feature type="site" description="Cleavage; by prohormone convertase 2" evidence="1">
    <location>
        <begin position="52"/>
        <end position="53"/>
    </location>
</feature>
<feature type="site" description="Cleavage; by prohormone convertase 2" evidence="1">
    <location>
        <begin position="72"/>
        <end position="73"/>
    </location>
</feature>
<feature type="modified residue" description="Glutamine amide" evidence="1">
    <location>
        <position position="49"/>
    </location>
</feature>
<dbReference type="EMBL" id="AC142413">
    <property type="status" value="NOT_ANNOTATED_CDS"/>
    <property type="molecule type" value="Genomic_DNA"/>
</dbReference>
<dbReference type="CCDS" id="CCDS90134.1"/>
<dbReference type="RefSeq" id="NP_001355944.1">
    <property type="nucleotide sequence ID" value="NM_001369015.1"/>
</dbReference>
<dbReference type="RefSeq" id="XP_006507032.1">
    <property type="nucleotide sequence ID" value="XM_006506969.3"/>
</dbReference>
<dbReference type="SMR" id="D3Z752"/>
<dbReference type="FunCoup" id="D3Z752">
    <property type="interactions" value="487"/>
</dbReference>
<dbReference type="STRING" id="10090.ENSMUSP00000118062"/>
<dbReference type="PaxDb" id="10090-ENSMUSP00000085597"/>
<dbReference type="Antibodypedia" id="2438">
    <property type="antibodies" value="24 antibodies from 10 providers"/>
</dbReference>
<dbReference type="Ensembl" id="ENSMUST00000211094.2">
    <property type="protein sequence ID" value="ENSMUSP00000147302.2"/>
    <property type="gene ID" value="ENSMUSG00000071112.13"/>
</dbReference>
<dbReference type="GeneID" id="319552"/>
<dbReference type="UCSC" id="uc009eph.2">
    <property type="organism name" value="mouse"/>
</dbReference>
<dbReference type="AGR" id="MGI:2442262"/>
<dbReference type="MGI" id="MGI:2442262">
    <property type="gene designation" value="Spx"/>
</dbReference>
<dbReference type="VEuPathDB" id="HostDB:ENSMUSG00000071112"/>
<dbReference type="eggNOG" id="ENOG502SAD1">
    <property type="taxonomic scope" value="Eukaryota"/>
</dbReference>
<dbReference type="GeneTree" id="ENSGT00390000012501"/>
<dbReference type="HOGENOM" id="CLU_169090_0_0_1"/>
<dbReference type="InParanoid" id="D3Z752"/>
<dbReference type="PhylomeDB" id="D3Z752"/>
<dbReference type="TreeFam" id="TF333402"/>
<dbReference type="BioGRID-ORCS" id="319552">
    <property type="hits" value="2 hits in 38 CRISPR screens"/>
</dbReference>
<dbReference type="PRO" id="PR:D3Z752"/>
<dbReference type="Proteomes" id="UP000000589">
    <property type="component" value="Chromosome 6"/>
</dbReference>
<dbReference type="RNAct" id="D3Z752">
    <property type="molecule type" value="protein"/>
</dbReference>
<dbReference type="Bgee" id="ENSMUSG00000071112">
    <property type="expression patterns" value="Expressed in habenula and 96 other cell types or tissues"/>
</dbReference>
<dbReference type="ExpressionAtlas" id="D3Z752">
    <property type="expression patterns" value="baseline and differential"/>
</dbReference>
<dbReference type="GO" id="GO:0031045">
    <property type="term" value="C:dense core granule"/>
    <property type="evidence" value="ECO:0000250"/>
    <property type="project" value="UniProtKB"/>
</dbReference>
<dbReference type="GO" id="GO:0005615">
    <property type="term" value="C:extracellular space"/>
    <property type="evidence" value="ECO:0000250"/>
    <property type="project" value="UniProtKB"/>
</dbReference>
<dbReference type="GO" id="GO:0030133">
    <property type="term" value="C:transport vesicle"/>
    <property type="evidence" value="ECO:0007669"/>
    <property type="project" value="UniProtKB-SubCell"/>
</dbReference>
<dbReference type="GO" id="GO:0005184">
    <property type="term" value="F:neuropeptide hormone activity"/>
    <property type="evidence" value="ECO:0000250"/>
    <property type="project" value="UniProtKB"/>
</dbReference>
<dbReference type="GO" id="GO:0031765">
    <property type="term" value="F:type 2 galanin receptor binding"/>
    <property type="evidence" value="ECO:0000250"/>
    <property type="project" value="UniProtKB"/>
</dbReference>
<dbReference type="GO" id="GO:0031766">
    <property type="term" value="F:type 3 galanin receptor binding"/>
    <property type="evidence" value="ECO:0000250"/>
    <property type="project" value="UniProtKB"/>
</dbReference>
<dbReference type="GO" id="GO:0010459">
    <property type="term" value="P:negative regulation of heart rate"/>
    <property type="evidence" value="ECO:0000250"/>
    <property type="project" value="UniProtKB"/>
</dbReference>
<dbReference type="GO" id="GO:0035814">
    <property type="term" value="P:negative regulation of renal sodium excretion"/>
    <property type="evidence" value="ECO:0000250"/>
    <property type="project" value="UniProtKB"/>
</dbReference>
<dbReference type="GO" id="GO:1904306">
    <property type="term" value="P:positive regulation of gastro-intestinal system smooth muscle contraction"/>
    <property type="evidence" value="ECO:0000250"/>
    <property type="project" value="UniProtKB"/>
</dbReference>
<dbReference type="GO" id="GO:0003084">
    <property type="term" value="P:positive regulation of systemic arterial blood pressure"/>
    <property type="evidence" value="ECO:0000250"/>
    <property type="project" value="UniProtKB"/>
</dbReference>
<dbReference type="GO" id="GO:0045944">
    <property type="term" value="P:positive regulation of transcription by RNA polymerase II"/>
    <property type="evidence" value="ECO:0000250"/>
    <property type="project" value="UniProtKB"/>
</dbReference>
<dbReference type="GO" id="GO:0051930">
    <property type="term" value="P:regulation of sensory perception of pain"/>
    <property type="evidence" value="ECO:0000250"/>
    <property type="project" value="UniProtKB"/>
</dbReference>
<dbReference type="InterPro" id="IPR028126">
    <property type="entry name" value="Spexin"/>
</dbReference>
<dbReference type="PANTHER" id="PTHR28590">
    <property type="entry name" value="SPEXIN"/>
    <property type="match status" value="1"/>
</dbReference>
<dbReference type="PANTHER" id="PTHR28590:SF1">
    <property type="entry name" value="SPEXIN"/>
    <property type="match status" value="1"/>
</dbReference>
<dbReference type="Pfam" id="PF15171">
    <property type="entry name" value="Spexin"/>
    <property type="match status" value="1"/>
</dbReference>
<accession>D3Z752</accession>
<gene>
    <name type="primary">Spx</name>
</gene>
<comment type="function">
    <text evidence="1">Plays a role as a central modulator of cardiovascular and renal function and nociception. Also plays a role in energy metabolism and storage. Inhibits adrenocortical cell proliferation with minor stimulation on corticosteroid release (By similarity).</text>
</comment>
<comment type="function">
    <molecule>Spexin-1</molecule>
    <text evidence="1 4">Acts as a ligand for galanin receptors GALR2 and GALR3. Intracerebroventricular administration of the peptide induces an increase in arterial blood pressure, a decrease in both heart rate and renal excretion and delayed natriuresis. Intraventricular administration of the peptide induces antinociceptive activity. Also induces contraction of muscarinic-like stomach smooth muscles (By similarity). Intraperitoneal administration of the peptide induces a reduction in food consumption and body weight. Inhibits long chain fatty acid uptake into adipocytes (PubMed:24550067).</text>
</comment>
<comment type="function">
    <molecule>Spexin-2</molecule>
    <text evidence="1">Intracerebroventricular administration of the peptide induces a decrease in heart rate, but no change in arterial pressure, and an increase in urine flow rate. Intraventricular administration of the peptide induces antinociceptive activity (By similarity).</text>
</comment>
<comment type="subcellular location">
    <subcellularLocation>
        <location evidence="4">Secreted</location>
    </subcellularLocation>
    <subcellularLocation>
        <location evidence="1">Secreted</location>
        <location evidence="1">Extracellular space</location>
    </subcellularLocation>
    <subcellularLocation>
        <location evidence="1">Cytoplasmic vesicle</location>
        <location evidence="1">Secretory vesicle</location>
    </subcellularLocation>
    <text evidence="1">Secreted via the classical ER/Golgi-dependent pathway into the extracellular medium largely as a full-length protein without the signal peptide, and not as a hydrolyzed and amidated peptide. Localized extracellularly surrounding the villous trophoblastic cells (By similarity). Detected in the serum.</text>
</comment>
<comment type="induction">
    <text evidence="4">Down-regulated in omental and subcutaneous fat of obese animals.</text>
</comment>
<comment type="similarity">
    <text evidence="5">Belongs to the spexin family.</text>
</comment>
<organism>
    <name type="scientific">Mus musculus</name>
    <name type="common">Mouse</name>
    <dbReference type="NCBI Taxonomy" id="10090"/>
    <lineage>
        <taxon>Eukaryota</taxon>
        <taxon>Metazoa</taxon>
        <taxon>Chordata</taxon>
        <taxon>Craniata</taxon>
        <taxon>Vertebrata</taxon>
        <taxon>Euteleostomi</taxon>
        <taxon>Mammalia</taxon>
        <taxon>Eutheria</taxon>
        <taxon>Euarchontoglires</taxon>
        <taxon>Glires</taxon>
        <taxon>Rodentia</taxon>
        <taxon>Myomorpha</taxon>
        <taxon>Muroidea</taxon>
        <taxon>Muridae</taxon>
        <taxon>Murinae</taxon>
        <taxon>Mus</taxon>
        <taxon>Mus</taxon>
    </lineage>
</organism>
<sequence length="116" mass="13004">MKGPSVLAVTAVVLLLVLSALENSSGAPQRLSEKRNWTPQAMLYLKGAQGRRFLSDQSRRKELADRPPPERRNPDLELLTLPEAAALFLASLEKSQKDEGGNFDKSELLEDRLFNW</sequence>